<organism>
    <name type="scientific">Acinetobacter baumannii (strain SDF)</name>
    <dbReference type="NCBI Taxonomy" id="509170"/>
    <lineage>
        <taxon>Bacteria</taxon>
        <taxon>Pseudomonadati</taxon>
        <taxon>Pseudomonadota</taxon>
        <taxon>Gammaproteobacteria</taxon>
        <taxon>Moraxellales</taxon>
        <taxon>Moraxellaceae</taxon>
        <taxon>Acinetobacter</taxon>
        <taxon>Acinetobacter calcoaceticus/baumannii complex</taxon>
    </lineage>
</organism>
<proteinExistence type="inferred from homology"/>
<evidence type="ECO:0000255" key="1">
    <source>
        <dbReference type="HAMAP-Rule" id="MF_00694"/>
    </source>
</evidence>
<gene>
    <name type="ordered locus">ABSDF1408</name>
</gene>
<name>KDGD_ACIBS</name>
<sequence length="303" mass="32825">MDALELKNIISDGLLSFPVTDFDQNGDFNKSSYAKRLEWLAPYGASALFAAGGTGEFFSLTGNEYSEVIKTAVDICKGSVPIIAGAGGPTRQAIEQAKEAERLGAHGILLMPHYLTEASQEGLIEHVKQVCNSVDFGVIFYNRSVSRLNLDSIQKLTEMCPNLIGFKDSSGQIDMMTAVTQTIGDRLSYLGGLPTAEVFAAPYKALGCPVYSSAVFNFIPKTAMEFYNALRSDDFETTNRLIKDFFLPLIKIRDRKSGYAVSMIKAGAKIVGHDAGPVRPPLSDLTQADYEDLAALIATLGPQ</sequence>
<comment type="catalytic activity">
    <reaction evidence="1">
        <text>5-dehydro-4-deoxy-D-glucarate + H(+) = 2,5-dioxopentanoate + CO2 + H2O</text>
        <dbReference type="Rhea" id="RHEA:24608"/>
        <dbReference type="ChEBI" id="CHEBI:15377"/>
        <dbReference type="ChEBI" id="CHEBI:15378"/>
        <dbReference type="ChEBI" id="CHEBI:16526"/>
        <dbReference type="ChEBI" id="CHEBI:42819"/>
        <dbReference type="ChEBI" id="CHEBI:58136"/>
        <dbReference type="EC" id="4.2.1.41"/>
    </reaction>
</comment>
<comment type="pathway">
    <text evidence="1">Carbohydrate acid metabolism; D-glucarate degradation; 2,5-dioxopentanoate from D-glucarate: step 2/2.</text>
</comment>
<comment type="similarity">
    <text evidence="1">Belongs to the DapA family.</text>
</comment>
<feature type="chain" id="PRO_1000132266" description="Probable 5-dehydro-4-deoxyglucarate dehydratase">
    <location>
        <begin position="1"/>
        <end position="303"/>
    </location>
</feature>
<protein>
    <recommendedName>
        <fullName evidence="1">Probable 5-dehydro-4-deoxyglucarate dehydratase</fullName>
        <ecNumber evidence="1">4.2.1.41</ecNumber>
    </recommendedName>
    <alternativeName>
        <fullName evidence="1">5-keto-4-deoxy-glucarate dehydratase</fullName>
        <shortName evidence="1">KDGDH</shortName>
    </alternativeName>
</protein>
<accession>B0VL04</accession>
<reference key="1">
    <citation type="journal article" date="2008" name="PLoS ONE">
        <title>Comparative analysis of Acinetobacters: three genomes for three lifestyles.</title>
        <authorList>
            <person name="Vallenet D."/>
            <person name="Nordmann P."/>
            <person name="Barbe V."/>
            <person name="Poirel L."/>
            <person name="Mangenot S."/>
            <person name="Bataille E."/>
            <person name="Dossat C."/>
            <person name="Gas S."/>
            <person name="Kreimeyer A."/>
            <person name="Lenoble P."/>
            <person name="Oztas S."/>
            <person name="Poulain J."/>
            <person name="Segurens B."/>
            <person name="Robert C."/>
            <person name="Abergel C."/>
            <person name="Claverie J.-M."/>
            <person name="Raoult D."/>
            <person name="Medigue C."/>
            <person name="Weissenbach J."/>
            <person name="Cruveiller S."/>
        </authorList>
    </citation>
    <scope>NUCLEOTIDE SEQUENCE [LARGE SCALE GENOMIC DNA]</scope>
    <source>
        <strain>SDF</strain>
    </source>
</reference>
<keyword id="KW-0456">Lyase</keyword>
<dbReference type="EC" id="4.2.1.41" evidence="1"/>
<dbReference type="EMBL" id="CU468230">
    <property type="protein sequence ID" value="CAP00754.1"/>
    <property type="molecule type" value="Genomic_DNA"/>
</dbReference>
<dbReference type="SMR" id="B0VL04"/>
<dbReference type="KEGG" id="abm:ABSDF1408"/>
<dbReference type="HOGENOM" id="CLU_049343_5_2_6"/>
<dbReference type="BioCyc" id="ABAU509170:GCL9-1142-MONOMER"/>
<dbReference type="UniPathway" id="UPA00564">
    <property type="reaction ID" value="UER00628"/>
</dbReference>
<dbReference type="Proteomes" id="UP000001741">
    <property type="component" value="Chromosome"/>
</dbReference>
<dbReference type="GO" id="GO:0008840">
    <property type="term" value="F:4-hydroxy-tetrahydrodipicolinate synthase activity"/>
    <property type="evidence" value="ECO:0007669"/>
    <property type="project" value="TreeGrafter"/>
</dbReference>
<dbReference type="GO" id="GO:0047448">
    <property type="term" value="F:5-dehydro-4-deoxyglucarate dehydratase activity"/>
    <property type="evidence" value="ECO:0007669"/>
    <property type="project" value="UniProtKB-UniRule"/>
</dbReference>
<dbReference type="GO" id="GO:0042838">
    <property type="term" value="P:D-glucarate catabolic process"/>
    <property type="evidence" value="ECO:0007669"/>
    <property type="project" value="UniProtKB-UniRule"/>
</dbReference>
<dbReference type="CDD" id="cd00951">
    <property type="entry name" value="KDGDH"/>
    <property type="match status" value="1"/>
</dbReference>
<dbReference type="Gene3D" id="3.20.20.70">
    <property type="entry name" value="Aldolase class I"/>
    <property type="match status" value="1"/>
</dbReference>
<dbReference type="HAMAP" id="MF_00694">
    <property type="entry name" value="KDGDH"/>
    <property type="match status" value="1"/>
</dbReference>
<dbReference type="InterPro" id="IPR013785">
    <property type="entry name" value="Aldolase_TIM"/>
</dbReference>
<dbReference type="InterPro" id="IPR002220">
    <property type="entry name" value="DapA-like"/>
</dbReference>
<dbReference type="InterPro" id="IPR017655">
    <property type="entry name" value="Dehydro-deoxyglucarate_dehyd"/>
</dbReference>
<dbReference type="NCBIfam" id="TIGR03249">
    <property type="entry name" value="KdgD"/>
    <property type="match status" value="1"/>
</dbReference>
<dbReference type="NCBIfam" id="NF002958">
    <property type="entry name" value="PRK03620.1"/>
    <property type="match status" value="1"/>
</dbReference>
<dbReference type="PANTHER" id="PTHR12128:SF19">
    <property type="entry name" value="5-DEHYDRO-4-DEOXYGLUCARATE DEHYDRATASE 2-RELATED"/>
    <property type="match status" value="1"/>
</dbReference>
<dbReference type="PANTHER" id="PTHR12128">
    <property type="entry name" value="DIHYDRODIPICOLINATE SYNTHASE"/>
    <property type="match status" value="1"/>
</dbReference>
<dbReference type="Pfam" id="PF00701">
    <property type="entry name" value="DHDPS"/>
    <property type="match status" value="1"/>
</dbReference>
<dbReference type="PIRSF" id="PIRSF001365">
    <property type="entry name" value="DHDPS"/>
    <property type="match status" value="1"/>
</dbReference>
<dbReference type="PRINTS" id="PR00146">
    <property type="entry name" value="DHPICSNTHASE"/>
</dbReference>
<dbReference type="SMART" id="SM01130">
    <property type="entry name" value="DHDPS"/>
    <property type="match status" value="1"/>
</dbReference>
<dbReference type="SUPFAM" id="SSF51569">
    <property type="entry name" value="Aldolase"/>
    <property type="match status" value="1"/>
</dbReference>